<feature type="chain" id="PRO_0000366642" description="Ribosomal RNA large subunit methyltransferase H">
    <location>
        <begin position="1"/>
        <end position="155"/>
    </location>
</feature>
<feature type="binding site" evidence="1">
    <location>
        <position position="73"/>
    </location>
    <ligand>
        <name>S-adenosyl-L-methionine</name>
        <dbReference type="ChEBI" id="CHEBI:59789"/>
    </ligand>
</feature>
<feature type="binding site" evidence="1">
    <location>
        <position position="104"/>
    </location>
    <ligand>
        <name>S-adenosyl-L-methionine</name>
        <dbReference type="ChEBI" id="CHEBI:59789"/>
    </ligand>
</feature>
<feature type="binding site" evidence="1">
    <location>
        <begin position="123"/>
        <end position="128"/>
    </location>
    <ligand>
        <name>S-adenosyl-L-methionine</name>
        <dbReference type="ChEBI" id="CHEBI:59789"/>
    </ligand>
</feature>
<comment type="function">
    <text evidence="1">Specifically methylates the pseudouridine at position 1915 (m3Psi1915) in 23S rRNA.</text>
</comment>
<comment type="catalytic activity">
    <reaction evidence="1">
        <text>pseudouridine(1915) in 23S rRNA + S-adenosyl-L-methionine = N(3)-methylpseudouridine(1915) in 23S rRNA + S-adenosyl-L-homocysteine + H(+)</text>
        <dbReference type="Rhea" id="RHEA:42752"/>
        <dbReference type="Rhea" id="RHEA-COMP:10221"/>
        <dbReference type="Rhea" id="RHEA-COMP:10222"/>
        <dbReference type="ChEBI" id="CHEBI:15378"/>
        <dbReference type="ChEBI" id="CHEBI:57856"/>
        <dbReference type="ChEBI" id="CHEBI:59789"/>
        <dbReference type="ChEBI" id="CHEBI:65314"/>
        <dbReference type="ChEBI" id="CHEBI:74486"/>
        <dbReference type="EC" id="2.1.1.177"/>
    </reaction>
</comment>
<comment type="subunit">
    <text evidence="1">Homodimer.</text>
</comment>
<comment type="subcellular location">
    <subcellularLocation>
        <location evidence="1">Cytoplasm</location>
    </subcellularLocation>
</comment>
<comment type="similarity">
    <text evidence="1">Belongs to the RNA methyltransferase RlmH family.</text>
</comment>
<comment type="sequence caution" evidence="2">
    <conflict type="erroneous initiation">
        <sequence resource="EMBL-CDS" id="ABP81405"/>
    </conflict>
</comment>
<protein>
    <recommendedName>
        <fullName evidence="1">Ribosomal RNA large subunit methyltransferase H</fullName>
        <ecNumber evidence="1">2.1.1.177</ecNumber>
    </recommendedName>
    <alternativeName>
        <fullName evidence="1">23S rRNA (pseudouridine1915-N3)-methyltransferase</fullName>
    </alternativeName>
    <alternativeName>
        <fullName evidence="1">23S rRNA m3Psi1915 methyltransferase</fullName>
    </alternativeName>
    <alternativeName>
        <fullName evidence="1">rRNA (pseudouridine-N3-)-methyltransferase RlmH</fullName>
    </alternativeName>
</protein>
<dbReference type="EC" id="2.1.1.177" evidence="1"/>
<dbReference type="EMBL" id="CP000304">
    <property type="protein sequence ID" value="ABP81405.1"/>
    <property type="status" value="ALT_INIT"/>
    <property type="molecule type" value="Genomic_DNA"/>
</dbReference>
<dbReference type="RefSeq" id="WP_011914790.1">
    <property type="nucleotide sequence ID" value="NC_009434.1"/>
</dbReference>
<dbReference type="SMR" id="A4VR04"/>
<dbReference type="GeneID" id="66823044"/>
<dbReference type="KEGG" id="psa:PST_3782"/>
<dbReference type="eggNOG" id="COG1576">
    <property type="taxonomic scope" value="Bacteria"/>
</dbReference>
<dbReference type="HOGENOM" id="CLU_100552_1_0_6"/>
<dbReference type="Proteomes" id="UP000000233">
    <property type="component" value="Chromosome"/>
</dbReference>
<dbReference type="GO" id="GO:0005737">
    <property type="term" value="C:cytoplasm"/>
    <property type="evidence" value="ECO:0007669"/>
    <property type="project" value="UniProtKB-SubCell"/>
</dbReference>
<dbReference type="GO" id="GO:0070038">
    <property type="term" value="F:rRNA (pseudouridine-N3-)-methyltransferase activity"/>
    <property type="evidence" value="ECO:0007669"/>
    <property type="project" value="UniProtKB-UniRule"/>
</dbReference>
<dbReference type="CDD" id="cd18081">
    <property type="entry name" value="RlmH-like"/>
    <property type="match status" value="1"/>
</dbReference>
<dbReference type="Gene3D" id="3.40.1280.10">
    <property type="match status" value="1"/>
</dbReference>
<dbReference type="HAMAP" id="MF_00658">
    <property type="entry name" value="23SrRNA_methyltr_H"/>
    <property type="match status" value="1"/>
</dbReference>
<dbReference type="InterPro" id="IPR029028">
    <property type="entry name" value="Alpha/beta_knot_MTases"/>
</dbReference>
<dbReference type="InterPro" id="IPR003742">
    <property type="entry name" value="RlmH-like"/>
</dbReference>
<dbReference type="InterPro" id="IPR029026">
    <property type="entry name" value="tRNA_m1G_MTases_N"/>
</dbReference>
<dbReference type="NCBIfam" id="NF000986">
    <property type="entry name" value="PRK00103.1-4"/>
    <property type="match status" value="1"/>
</dbReference>
<dbReference type="NCBIfam" id="TIGR00246">
    <property type="entry name" value="tRNA_RlmH_YbeA"/>
    <property type="match status" value="1"/>
</dbReference>
<dbReference type="PANTHER" id="PTHR33603">
    <property type="entry name" value="METHYLTRANSFERASE"/>
    <property type="match status" value="1"/>
</dbReference>
<dbReference type="PANTHER" id="PTHR33603:SF1">
    <property type="entry name" value="RIBOSOMAL RNA LARGE SUBUNIT METHYLTRANSFERASE H"/>
    <property type="match status" value="1"/>
</dbReference>
<dbReference type="Pfam" id="PF02590">
    <property type="entry name" value="SPOUT_MTase"/>
    <property type="match status" value="1"/>
</dbReference>
<dbReference type="PIRSF" id="PIRSF004505">
    <property type="entry name" value="MT_bac"/>
    <property type="match status" value="1"/>
</dbReference>
<dbReference type="SUPFAM" id="SSF75217">
    <property type="entry name" value="alpha/beta knot"/>
    <property type="match status" value="1"/>
</dbReference>
<accession>A4VR04</accession>
<keyword id="KW-0963">Cytoplasm</keyword>
<keyword id="KW-0489">Methyltransferase</keyword>
<keyword id="KW-1185">Reference proteome</keyword>
<keyword id="KW-0698">rRNA processing</keyword>
<keyword id="KW-0949">S-adenosyl-L-methionine</keyword>
<keyword id="KW-0808">Transferase</keyword>
<reference key="1">
    <citation type="journal article" date="2008" name="Proc. Natl. Acad. Sci. U.S.A.">
        <title>Nitrogen fixation island and rhizosphere competence traits in the genome of root-associated Pseudomonas stutzeri A1501.</title>
        <authorList>
            <person name="Yan Y."/>
            <person name="Yang J."/>
            <person name="Dou Y."/>
            <person name="Chen M."/>
            <person name="Ping S."/>
            <person name="Peng J."/>
            <person name="Lu W."/>
            <person name="Zhang W."/>
            <person name="Yao Z."/>
            <person name="Li H."/>
            <person name="Liu W."/>
            <person name="He S."/>
            <person name="Geng L."/>
            <person name="Zhang X."/>
            <person name="Yang F."/>
            <person name="Yu H."/>
            <person name="Zhan Y."/>
            <person name="Li D."/>
            <person name="Lin Z."/>
            <person name="Wang Y."/>
            <person name="Elmerich C."/>
            <person name="Lin M."/>
            <person name="Jin Q."/>
        </authorList>
    </citation>
    <scope>NUCLEOTIDE SEQUENCE [LARGE SCALE GENOMIC DNA]</scope>
    <source>
        <strain>A1501</strain>
    </source>
</reference>
<evidence type="ECO:0000255" key="1">
    <source>
        <dbReference type="HAMAP-Rule" id="MF_00658"/>
    </source>
</evidence>
<evidence type="ECO:0000305" key="2"/>
<gene>
    <name evidence="1" type="primary">rlmH</name>
    <name type="ordered locus">PST_3782</name>
</gene>
<proteinExistence type="inferred from homology"/>
<organism>
    <name type="scientific">Stutzerimonas stutzeri (strain A1501)</name>
    <name type="common">Pseudomonas stutzeri</name>
    <dbReference type="NCBI Taxonomy" id="379731"/>
    <lineage>
        <taxon>Bacteria</taxon>
        <taxon>Pseudomonadati</taxon>
        <taxon>Pseudomonadota</taxon>
        <taxon>Gammaproteobacteria</taxon>
        <taxon>Pseudomonadales</taxon>
        <taxon>Pseudomonadaceae</taxon>
        <taxon>Stutzerimonas</taxon>
    </lineage>
</organism>
<name>RLMH_STUS1</name>
<sequence length="155" mass="17693">MRIKLVAVGSKMPRWVEDGWQEYVKRLPSELPLELHEIPLNTRGKNADVARLIRQEGEAMLGKVQPGERIVTLEVHGKPWSTEQLAAELERWRLDARNVNLMVGGPEGLAPEVCARSEQRWSLSPLTLPHPLVRILIGEQIYRAWTLLSGHPYHK</sequence>